<feature type="chain" id="PRO_0000129126" description="Biopolymer transport protein ExbD">
    <location>
        <begin position="1"/>
        <end position="144"/>
    </location>
</feature>
<feature type="topological domain" description="Cytoplasmic" evidence="2">
    <location>
        <begin position="1"/>
        <end position="18"/>
    </location>
</feature>
<feature type="transmembrane region" description="Helical" evidence="2">
    <location>
        <begin position="19"/>
        <end position="39"/>
    </location>
</feature>
<feature type="topological domain" description="Periplasmic" evidence="2">
    <location>
        <begin position="40"/>
        <end position="144"/>
    </location>
</feature>
<dbReference type="EMBL" id="AE002098">
    <property type="protein sequence ID" value="AAF42073.1"/>
    <property type="molecule type" value="Genomic_DNA"/>
</dbReference>
<dbReference type="PIR" id="G81048">
    <property type="entry name" value="G81048"/>
</dbReference>
<dbReference type="RefSeq" id="NP_274731.1">
    <property type="nucleotide sequence ID" value="NC_003112.2"/>
</dbReference>
<dbReference type="RefSeq" id="WP_002212592.1">
    <property type="nucleotide sequence ID" value="NC_003112.2"/>
</dbReference>
<dbReference type="SMR" id="P0A0R9"/>
<dbReference type="FunCoup" id="P0A0R9">
    <property type="interactions" value="137"/>
</dbReference>
<dbReference type="STRING" id="122586.NMB1728"/>
<dbReference type="PaxDb" id="122586-NMB1728"/>
<dbReference type="KEGG" id="nme:NMB1728"/>
<dbReference type="PATRIC" id="fig|122586.8.peg.2215"/>
<dbReference type="HOGENOM" id="CLU_085305_1_1_4"/>
<dbReference type="InParanoid" id="P0A0R9"/>
<dbReference type="OrthoDB" id="9798629at2"/>
<dbReference type="Proteomes" id="UP000000425">
    <property type="component" value="Chromosome"/>
</dbReference>
<dbReference type="GO" id="GO:0005886">
    <property type="term" value="C:plasma membrane"/>
    <property type="evidence" value="ECO:0000318"/>
    <property type="project" value="GO_Central"/>
</dbReference>
<dbReference type="GO" id="GO:0022857">
    <property type="term" value="F:transmembrane transporter activity"/>
    <property type="evidence" value="ECO:0007669"/>
    <property type="project" value="InterPro"/>
</dbReference>
<dbReference type="GO" id="GO:0015031">
    <property type="term" value="P:protein transport"/>
    <property type="evidence" value="ECO:0007669"/>
    <property type="project" value="UniProtKB-KW"/>
</dbReference>
<dbReference type="Gene3D" id="3.30.420.270">
    <property type="match status" value="1"/>
</dbReference>
<dbReference type="InterPro" id="IPR003400">
    <property type="entry name" value="ExbD"/>
</dbReference>
<dbReference type="PANTHER" id="PTHR30558:SF12">
    <property type="entry name" value="BIOPOLYMER TRANSPORT PROTEIN EXBD"/>
    <property type="match status" value="1"/>
</dbReference>
<dbReference type="PANTHER" id="PTHR30558">
    <property type="entry name" value="EXBD MEMBRANE COMPONENT OF PMF-DRIVEN MACROMOLECULE IMPORT SYSTEM"/>
    <property type="match status" value="1"/>
</dbReference>
<dbReference type="Pfam" id="PF02472">
    <property type="entry name" value="ExbD"/>
    <property type="match status" value="1"/>
</dbReference>
<sequence length="144" mass="15514">MAFGSMNSGDDSPMSDINVTPLVDVMLVLLIVFMITMPVLTHSIPLELPTASEQTNKQDKQPKDPLRLTIDANGGYYVGGDSASKVEIGEVESRLKAAKEQNENVIVAIAADKAVEYDYVNKALEAARQAGITKIGFVTETKAQ</sequence>
<reference key="1">
    <citation type="journal article" date="2000" name="Science">
        <title>Complete genome sequence of Neisseria meningitidis serogroup B strain MC58.</title>
        <authorList>
            <person name="Tettelin H."/>
            <person name="Saunders N.J."/>
            <person name="Heidelberg J.F."/>
            <person name="Jeffries A.C."/>
            <person name="Nelson K.E."/>
            <person name="Eisen J.A."/>
            <person name="Ketchum K.A."/>
            <person name="Hood D.W."/>
            <person name="Peden J.F."/>
            <person name="Dodson R.J."/>
            <person name="Nelson W.C."/>
            <person name="Gwinn M.L."/>
            <person name="DeBoy R.T."/>
            <person name="Peterson J.D."/>
            <person name="Hickey E.K."/>
            <person name="Haft D.H."/>
            <person name="Salzberg S.L."/>
            <person name="White O."/>
            <person name="Fleischmann R.D."/>
            <person name="Dougherty B.A."/>
            <person name="Mason T.M."/>
            <person name="Ciecko A."/>
            <person name="Parksey D.S."/>
            <person name="Blair E."/>
            <person name="Cittone H."/>
            <person name="Clark E.B."/>
            <person name="Cotton M.D."/>
            <person name="Utterback T.R."/>
            <person name="Khouri H.M."/>
            <person name="Qin H."/>
            <person name="Vamathevan J.J."/>
            <person name="Gill J."/>
            <person name="Scarlato V."/>
            <person name="Masignani V."/>
            <person name="Pizza M."/>
            <person name="Grandi G."/>
            <person name="Sun L."/>
            <person name="Smith H.O."/>
            <person name="Fraser C.M."/>
            <person name="Moxon E.R."/>
            <person name="Rappuoli R."/>
            <person name="Venter J.C."/>
        </authorList>
    </citation>
    <scope>NUCLEOTIDE SEQUENCE [LARGE SCALE GENOMIC DNA]</scope>
    <source>
        <strain>ATCC BAA-335 / MC58</strain>
    </source>
</reference>
<protein>
    <recommendedName>
        <fullName>Biopolymer transport protein ExbD</fullName>
    </recommendedName>
</protein>
<comment type="function">
    <text evidence="1">Involved in the TonB-dependent energy-dependent transport of various receptor-bound substrates.</text>
</comment>
<comment type="subunit">
    <text evidence="1">The accessory proteins ExbB and ExbD seem to form a complex with TonB.</text>
</comment>
<comment type="subcellular location">
    <subcellularLocation>
        <location evidence="3">Cell inner membrane</location>
        <topology evidence="3">Single-pass type II membrane protein</topology>
    </subcellularLocation>
</comment>
<comment type="similarity">
    <text evidence="3">Belongs to the ExbD/TolR family.</text>
</comment>
<name>EXBD_NEIMB</name>
<organism>
    <name type="scientific">Neisseria meningitidis serogroup B (strain ATCC BAA-335 / MC58)</name>
    <dbReference type="NCBI Taxonomy" id="122586"/>
    <lineage>
        <taxon>Bacteria</taxon>
        <taxon>Pseudomonadati</taxon>
        <taxon>Pseudomonadota</taxon>
        <taxon>Betaproteobacteria</taxon>
        <taxon>Neisseriales</taxon>
        <taxon>Neisseriaceae</taxon>
        <taxon>Neisseria</taxon>
    </lineage>
</organism>
<proteinExistence type="inferred from homology"/>
<accession>P0A0R9</accession>
<accession>P95376</accession>
<evidence type="ECO:0000250" key="1"/>
<evidence type="ECO:0000255" key="2"/>
<evidence type="ECO:0000305" key="3"/>
<keyword id="KW-0997">Cell inner membrane</keyword>
<keyword id="KW-1003">Cell membrane</keyword>
<keyword id="KW-0472">Membrane</keyword>
<keyword id="KW-0653">Protein transport</keyword>
<keyword id="KW-1185">Reference proteome</keyword>
<keyword id="KW-0812">Transmembrane</keyword>
<keyword id="KW-1133">Transmembrane helix</keyword>
<keyword id="KW-0813">Transport</keyword>
<gene>
    <name type="primary">exbD</name>
    <name type="ordered locus">NMB1728</name>
</gene>